<evidence type="ECO:0000255" key="1">
    <source>
        <dbReference type="HAMAP-Rule" id="MF_01694"/>
    </source>
</evidence>
<evidence type="ECO:0000255" key="2">
    <source>
        <dbReference type="PROSITE-ProRule" id="PRU01266"/>
    </source>
</evidence>
<name>BIOB_SYNAS</name>
<dbReference type="EC" id="2.8.1.6" evidence="1"/>
<dbReference type="EMBL" id="CP000252">
    <property type="protein sequence ID" value="ABC78971.1"/>
    <property type="molecule type" value="Genomic_DNA"/>
</dbReference>
<dbReference type="RefSeq" id="WP_011418985.1">
    <property type="nucleotide sequence ID" value="NC_007759.1"/>
</dbReference>
<dbReference type="SMR" id="Q2LY09"/>
<dbReference type="FunCoup" id="Q2LY09">
    <property type="interactions" value="331"/>
</dbReference>
<dbReference type="STRING" id="56780.SYN_00212"/>
<dbReference type="KEGG" id="sat:SYN_00212"/>
<dbReference type="eggNOG" id="COG0502">
    <property type="taxonomic scope" value="Bacteria"/>
</dbReference>
<dbReference type="HOGENOM" id="CLU_033172_2_1_7"/>
<dbReference type="InParanoid" id="Q2LY09"/>
<dbReference type="OrthoDB" id="9786826at2"/>
<dbReference type="UniPathway" id="UPA00078">
    <property type="reaction ID" value="UER00162"/>
</dbReference>
<dbReference type="Proteomes" id="UP000001933">
    <property type="component" value="Chromosome"/>
</dbReference>
<dbReference type="GO" id="GO:0051537">
    <property type="term" value="F:2 iron, 2 sulfur cluster binding"/>
    <property type="evidence" value="ECO:0007669"/>
    <property type="project" value="UniProtKB-KW"/>
</dbReference>
<dbReference type="GO" id="GO:0051539">
    <property type="term" value="F:4 iron, 4 sulfur cluster binding"/>
    <property type="evidence" value="ECO:0007669"/>
    <property type="project" value="UniProtKB-KW"/>
</dbReference>
<dbReference type="GO" id="GO:0004076">
    <property type="term" value="F:biotin synthase activity"/>
    <property type="evidence" value="ECO:0007669"/>
    <property type="project" value="UniProtKB-UniRule"/>
</dbReference>
<dbReference type="GO" id="GO:0005506">
    <property type="term" value="F:iron ion binding"/>
    <property type="evidence" value="ECO:0007669"/>
    <property type="project" value="UniProtKB-UniRule"/>
</dbReference>
<dbReference type="GO" id="GO:0009102">
    <property type="term" value="P:biotin biosynthetic process"/>
    <property type="evidence" value="ECO:0007669"/>
    <property type="project" value="UniProtKB-UniRule"/>
</dbReference>
<dbReference type="CDD" id="cd01335">
    <property type="entry name" value="Radical_SAM"/>
    <property type="match status" value="1"/>
</dbReference>
<dbReference type="Gene3D" id="3.20.20.70">
    <property type="entry name" value="Aldolase class I"/>
    <property type="match status" value="1"/>
</dbReference>
<dbReference type="HAMAP" id="MF_01694">
    <property type="entry name" value="BioB"/>
    <property type="match status" value="1"/>
</dbReference>
<dbReference type="InterPro" id="IPR013785">
    <property type="entry name" value="Aldolase_TIM"/>
</dbReference>
<dbReference type="InterPro" id="IPR010722">
    <property type="entry name" value="BATS_dom"/>
</dbReference>
<dbReference type="InterPro" id="IPR002684">
    <property type="entry name" value="Biotin_synth/BioAB"/>
</dbReference>
<dbReference type="InterPro" id="IPR024177">
    <property type="entry name" value="Biotin_synthase"/>
</dbReference>
<dbReference type="InterPro" id="IPR006638">
    <property type="entry name" value="Elp3/MiaA/NifB-like_rSAM"/>
</dbReference>
<dbReference type="InterPro" id="IPR007197">
    <property type="entry name" value="rSAM"/>
</dbReference>
<dbReference type="NCBIfam" id="TIGR00433">
    <property type="entry name" value="bioB"/>
    <property type="match status" value="1"/>
</dbReference>
<dbReference type="PANTHER" id="PTHR22976">
    <property type="entry name" value="BIOTIN SYNTHASE"/>
    <property type="match status" value="1"/>
</dbReference>
<dbReference type="PANTHER" id="PTHR22976:SF2">
    <property type="entry name" value="BIOTIN SYNTHASE, MITOCHONDRIAL"/>
    <property type="match status" value="1"/>
</dbReference>
<dbReference type="Pfam" id="PF06968">
    <property type="entry name" value="BATS"/>
    <property type="match status" value="1"/>
</dbReference>
<dbReference type="Pfam" id="PF04055">
    <property type="entry name" value="Radical_SAM"/>
    <property type="match status" value="1"/>
</dbReference>
<dbReference type="PIRSF" id="PIRSF001619">
    <property type="entry name" value="Biotin_synth"/>
    <property type="match status" value="1"/>
</dbReference>
<dbReference type="SFLD" id="SFLDG01060">
    <property type="entry name" value="BATS_domain_containing"/>
    <property type="match status" value="1"/>
</dbReference>
<dbReference type="SFLD" id="SFLDG01278">
    <property type="entry name" value="biotin_synthase_like"/>
    <property type="match status" value="1"/>
</dbReference>
<dbReference type="SMART" id="SM00876">
    <property type="entry name" value="BATS"/>
    <property type="match status" value="1"/>
</dbReference>
<dbReference type="SMART" id="SM00729">
    <property type="entry name" value="Elp3"/>
    <property type="match status" value="1"/>
</dbReference>
<dbReference type="SUPFAM" id="SSF102114">
    <property type="entry name" value="Radical SAM enzymes"/>
    <property type="match status" value="1"/>
</dbReference>
<dbReference type="PROSITE" id="PS51918">
    <property type="entry name" value="RADICAL_SAM"/>
    <property type="match status" value="1"/>
</dbReference>
<accession>Q2LY09</accession>
<feature type="chain" id="PRO_0000381671" description="Biotin synthase">
    <location>
        <begin position="1"/>
        <end position="325"/>
    </location>
</feature>
<feature type="domain" description="Radical SAM core" evidence="2">
    <location>
        <begin position="52"/>
        <end position="281"/>
    </location>
</feature>
<feature type="binding site" evidence="1">
    <location>
        <position position="70"/>
    </location>
    <ligand>
        <name>[4Fe-4S] cluster</name>
        <dbReference type="ChEBI" id="CHEBI:49883"/>
        <note>4Fe-4S-S-AdoMet</note>
    </ligand>
</feature>
<feature type="binding site" evidence="1">
    <location>
        <position position="74"/>
    </location>
    <ligand>
        <name>[4Fe-4S] cluster</name>
        <dbReference type="ChEBI" id="CHEBI:49883"/>
        <note>4Fe-4S-S-AdoMet</note>
    </ligand>
</feature>
<feature type="binding site" evidence="1">
    <location>
        <position position="77"/>
    </location>
    <ligand>
        <name>[4Fe-4S] cluster</name>
        <dbReference type="ChEBI" id="CHEBI:49883"/>
        <note>4Fe-4S-S-AdoMet</note>
    </ligand>
</feature>
<feature type="binding site" evidence="1">
    <location>
        <position position="114"/>
    </location>
    <ligand>
        <name>[2Fe-2S] cluster</name>
        <dbReference type="ChEBI" id="CHEBI:190135"/>
    </ligand>
</feature>
<feature type="binding site" evidence="1">
    <location>
        <position position="146"/>
    </location>
    <ligand>
        <name>[2Fe-2S] cluster</name>
        <dbReference type="ChEBI" id="CHEBI:190135"/>
    </ligand>
</feature>
<feature type="binding site" evidence="1">
    <location>
        <position position="206"/>
    </location>
    <ligand>
        <name>[2Fe-2S] cluster</name>
        <dbReference type="ChEBI" id="CHEBI:190135"/>
    </ligand>
</feature>
<gene>
    <name evidence="1" type="primary">bioB</name>
    <name type="ordered locus">SYNAS_30920</name>
    <name type="ORF">SYN_00212</name>
</gene>
<comment type="function">
    <text evidence="1">Catalyzes the conversion of dethiobiotin (DTB) to biotin by the insertion of a sulfur atom into dethiobiotin via a radical-based mechanism.</text>
</comment>
<comment type="catalytic activity">
    <reaction evidence="1">
        <text>(4R,5S)-dethiobiotin + (sulfur carrier)-SH + 2 reduced [2Fe-2S]-[ferredoxin] + 2 S-adenosyl-L-methionine = (sulfur carrier)-H + biotin + 2 5'-deoxyadenosine + 2 L-methionine + 2 oxidized [2Fe-2S]-[ferredoxin]</text>
        <dbReference type="Rhea" id="RHEA:22060"/>
        <dbReference type="Rhea" id="RHEA-COMP:10000"/>
        <dbReference type="Rhea" id="RHEA-COMP:10001"/>
        <dbReference type="Rhea" id="RHEA-COMP:14737"/>
        <dbReference type="Rhea" id="RHEA-COMP:14739"/>
        <dbReference type="ChEBI" id="CHEBI:17319"/>
        <dbReference type="ChEBI" id="CHEBI:29917"/>
        <dbReference type="ChEBI" id="CHEBI:33737"/>
        <dbReference type="ChEBI" id="CHEBI:33738"/>
        <dbReference type="ChEBI" id="CHEBI:57586"/>
        <dbReference type="ChEBI" id="CHEBI:57844"/>
        <dbReference type="ChEBI" id="CHEBI:59789"/>
        <dbReference type="ChEBI" id="CHEBI:64428"/>
        <dbReference type="ChEBI" id="CHEBI:149473"/>
        <dbReference type="EC" id="2.8.1.6"/>
    </reaction>
</comment>
<comment type="cofactor">
    <cofactor evidence="1">
        <name>[4Fe-4S] cluster</name>
        <dbReference type="ChEBI" id="CHEBI:49883"/>
    </cofactor>
    <text evidence="1">Binds 1 [4Fe-4S] cluster. The cluster is coordinated with 3 cysteines and an exchangeable S-adenosyl-L-methionine.</text>
</comment>
<comment type="cofactor">
    <cofactor evidence="1">
        <name>[2Fe-2S] cluster</name>
        <dbReference type="ChEBI" id="CHEBI:190135"/>
    </cofactor>
    <text evidence="1">Binds 1 [2Fe-2S] cluster. The cluster is coordinated with 3 cysteines and 1 arginine.</text>
</comment>
<comment type="pathway">
    <text evidence="1">Cofactor biosynthesis; biotin biosynthesis; biotin from 7,8-diaminononanoate: step 2/2.</text>
</comment>
<comment type="subunit">
    <text evidence="1">Homodimer.</text>
</comment>
<comment type="similarity">
    <text evidence="1">Belongs to the radical SAM superfamily. Biotin synthase family.</text>
</comment>
<organism>
    <name type="scientific">Syntrophus aciditrophicus (strain SB)</name>
    <dbReference type="NCBI Taxonomy" id="56780"/>
    <lineage>
        <taxon>Bacteria</taxon>
        <taxon>Pseudomonadati</taxon>
        <taxon>Thermodesulfobacteriota</taxon>
        <taxon>Syntrophia</taxon>
        <taxon>Syntrophales</taxon>
        <taxon>Syntrophaceae</taxon>
        <taxon>Syntrophus</taxon>
    </lineage>
</organism>
<proteinExistence type="inferred from homology"/>
<sequence>MILDSTVNMLAQKILDEGPQALSFQEACSLTELPARSIPDLFLAACKIRQHYQKDDVVLCSILNAKSGACAENCAFCSQSGHHRTDVVKRPLLSAEAMIEEARRLDSAGATRFSMVTSGSRLNAAEIETVGQAASAITKSTRLTVCASLGQLTASSAERLKAGGVSVYHHNLETARSFFPQICTTHDYEEDIETLLIARKAGLRLCSGGIFGLGESWEQRVEMAFTLRELDVDSIPINFLNPLPGTRMADRSLLPPMEALQVIALYRFIHPAKPLLICGGREITLRDFQSWIFLAGASGMIVGNYLTTQGRDIGMDRDMIQSGLF</sequence>
<keyword id="KW-0001">2Fe-2S</keyword>
<keyword id="KW-0004">4Fe-4S</keyword>
<keyword id="KW-0093">Biotin biosynthesis</keyword>
<keyword id="KW-0408">Iron</keyword>
<keyword id="KW-0411">Iron-sulfur</keyword>
<keyword id="KW-0479">Metal-binding</keyword>
<keyword id="KW-1185">Reference proteome</keyword>
<keyword id="KW-0949">S-adenosyl-L-methionine</keyword>
<keyword id="KW-0808">Transferase</keyword>
<protein>
    <recommendedName>
        <fullName evidence="1">Biotin synthase</fullName>
        <ecNumber evidence="1">2.8.1.6</ecNumber>
    </recommendedName>
</protein>
<reference key="1">
    <citation type="journal article" date="2007" name="Proc. Natl. Acad. Sci. U.S.A.">
        <title>The genome of Syntrophus aciditrophicus: life at the thermodynamic limit of microbial growth.</title>
        <authorList>
            <person name="McInerney M.J."/>
            <person name="Rohlin L."/>
            <person name="Mouttaki H."/>
            <person name="Kim U."/>
            <person name="Krupp R.S."/>
            <person name="Rios-Hernandez L."/>
            <person name="Sieber J."/>
            <person name="Struchtemeyer C.G."/>
            <person name="Bhattacharyya A."/>
            <person name="Campbell J.W."/>
            <person name="Gunsalus R.P."/>
        </authorList>
    </citation>
    <scope>NUCLEOTIDE SEQUENCE [LARGE SCALE GENOMIC DNA]</scope>
    <source>
        <strain>SB</strain>
    </source>
</reference>